<evidence type="ECO:0000250" key="1"/>
<evidence type="ECO:0000255" key="2"/>
<evidence type="ECO:0000255" key="3">
    <source>
        <dbReference type="PROSITE-ProRule" id="PRU00067"/>
    </source>
</evidence>
<evidence type="ECO:0000256" key="4">
    <source>
        <dbReference type="SAM" id="MobiDB-lite"/>
    </source>
</evidence>
<evidence type="ECO:0000305" key="5"/>
<comment type="function">
    <text evidence="1">Palmitoyltransferase specific for VAC8. Palmitoylates VAC8 at one or more of its N-terminal cysteine residues, which is required for its proper membrane localization (By similarity).</text>
</comment>
<comment type="catalytic activity">
    <reaction>
        <text>L-cysteinyl-[protein] + hexadecanoyl-CoA = S-hexadecanoyl-L-cysteinyl-[protein] + CoA</text>
        <dbReference type="Rhea" id="RHEA:36683"/>
        <dbReference type="Rhea" id="RHEA-COMP:10131"/>
        <dbReference type="Rhea" id="RHEA-COMP:11032"/>
        <dbReference type="ChEBI" id="CHEBI:29950"/>
        <dbReference type="ChEBI" id="CHEBI:57287"/>
        <dbReference type="ChEBI" id="CHEBI:57379"/>
        <dbReference type="ChEBI" id="CHEBI:74151"/>
        <dbReference type="EC" id="2.3.1.225"/>
    </reaction>
</comment>
<comment type="subcellular location">
    <subcellularLocation>
        <location evidence="1">Vacuole membrane</location>
        <topology evidence="1">Multi-pass membrane protein</topology>
    </subcellularLocation>
</comment>
<comment type="domain">
    <text evidence="1">The DHHC domain is required for palmitoyltransferase activity.</text>
</comment>
<comment type="PTM">
    <text evidence="1">Autopalmitoylated.</text>
</comment>
<comment type="similarity">
    <text evidence="5">Belongs to the DHHC palmitoyltransferase family. PFA3 subfamily.</text>
</comment>
<accession>Q4IA62</accession>
<accession>A0A0E0SJJ5</accession>
<accession>V6RD56</accession>
<proteinExistence type="inferred from homology"/>
<keyword id="KW-0012">Acyltransferase</keyword>
<keyword id="KW-0449">Lipoprotein</keyword>
<keyword id="KW-0472">Membrane</keyword>
<keyword id="KW-0564">Palmitate</keyword>
<keyword id="KW-1185">Reference proteome</keyword>
<keyword id="KW-0808">Transferase</keyword>
<keyword id="KW-0812">Transmembrane</keyword>
<keyword id="KW-1133">Transmembrane helix</keyword>
<keyword id="KW-0926">Vacuole</keyword>
<name>PFA3_GIBZE</name>
<protein>
    <recommendedName>
        <fullName>Palmitoyltransferase PFA3</fullName>
        <ecNumber>2.3.1.225</ecNumber>
    </recommendedName>
    <alternativeName>
        <fullName>Protein fatty acyltransferase 3</fullName>
    </alternativeName>
</protein>
<dbReference type="EC" id="2.3.1.225"/>
<dbReference type="EMBL" id="DS231665">
    <property type="protein sequence ID" value="ESU11927.1"/>
    <property type="molecule type" value="Genomic_DNA"/>
</dbReference>
<dbReference type="EMBL" id="HG970334">
    <property type="protein sequence ID" value="CEF86608.1"/>
    <property type="molecule type" value="Genomic_DNA"/>
</dbReference>
<dbReference type="RefSeq" id="XP_011324503.1">
    <property type="nucleotide sequence ID" value="XM_011326201.1"/>
</dbReference>
<dbReference type="SMR" id="Q4IA62"/>
<dbReference type="STRING" id="229533.Q4IA62"/>
<dbReference type="GeneID" id="23553049"/>
<dbReference type="KEGG" id="fgr:FGSG_05896"/>
<dbReference type="VEuPathDB" id="FungiDB:FGRAMPH1_01G19025"/>
<dbReference type="eggNOG" id="KOG1311">
    <property type="taxonomic scope" value="Eukaryota"/>
</dbReference>
<dbReference type="HOGENOM" id="CLU_024136_0_1_1"/>
<dbReference type="InParanoid" id="Q4IA62"/>
<dbReference type="OrthoDB" id="81564at110618"/>
<dbReference type="PHI-base" id="PHI:1674"/>
<dbReference type="Proteomes" id="UP000070720">
    <property type="component" value="Chromosome 3"/>
</dbReference>
<dbReference type="GO" id="GO:0005774">
    <property type="term" value="C:vacuolar membrane"/>
    <property type="evidence" value="ECO:0007669"/>
    <property type="project" value="UniProtKB-SubCell"/>
</dbReference>
<dbReference type="GO" id="GO:0019706">
    <property type="term" value="F:protein-cysteine S-palmitoyltransferase activity"/>
    <property type="evidence" value="ECO:0007669"/>
    <property type="project" value="UniProtKB-EC"/>
</dbReference>
<dbReference type="InterPro" id="IPR001594">
    <property type="entry name" value="Palmitoyltrfase_DHHC"/>
</dbReference>
<dbReference type="InterPro" id="IPR039859">
    <property type="entry name" value="PFA4/ZDH16/20/ERF2-like"/>
</dbReference>
<dbReference type="PANTHER" id="PTHR12246">
    <property type="entry name" value="PALMITOYLTRANSFERASE ZDHHC16"/>
    <property type="match status" value="1"/>
</dbReference>
<dbReference type="Pfam" id="PF01529">
    <property type="entry name" value="DHHC"/>
    <property type="match status" value="1"/>
</dbReference>
<dbReference type="PROSITE" id="PS50216">
    <property type="entry name" value="DHHC"/>
    <property type="match status" value="1"/>
</dbReference>
<reference key="1">
    <citation type="journal article" date="2007" name="Science">
        <title>The Fusarium graminearum genome reveals a link between localized polymorphism and pathogen specialization.</title>
        <authorList>
            <person name="Cuomo C.A."/>
            <person name="Gueldener U."/>
            <person name="Xu J.-R."/>
            <person name="Trail F."/>
            <person name="Turgeon B.G."/>
            <person name="Di Pietro A."/>
            <person name="Walton J.D."/>
            <person name="Ma L.-J."/>
            <person name="Baker S.E."/>
            <person name="Rep M."/>
            <person name="Adam G."/>
            <person name="Antoniw J."/>
            <person name="Baldwin T."/>
            <person name="Calvo S.E."/>
            <person name="Chang Y.-L."/>
            <person name="DeCaprio D."/>
            <person name="Gale L.R."/>
            <person name="Gnerre S."/>
            <person name="Goswami R.S."/>
            <person name="Hammond-Kosack K."/>
            <person name="Harris L.J."/>
            <person name="Hilburn K."/>
            <person name="Kennell J.C."/>
            <person name="Kroken S."/>
            <person name="Magnuson J.K."/>
            <person name="Mannhaupt G."/>
            <person name="Mauceli E.W."/>
            <person name="Mewes H.-W."/>
            <person name="Mitterbauer R."/>
            <person name="Muehlbauer G."/>
            <person name="Muensterkoetter M."/>
            <person name="Nelson D."/>
            <person name="O'Donnell K."/>
            <person name="Ouellet T."/>
            <person name="Qi W."/>
            <person name="Quesneville H."/>
            <person name="Roncero M.I.G."/>
            <person name="Seong K.-Y."/>
            <person name="Tetko I.V."/>
            <person name="Urban M."/>
            <person name="Waalwijk C."/>
            <person name="Ward T.J."/>
            <person name="Yao J."/>
            <person name="Birren B.W."/>
            <person name="Kistler H.C."/>
        </authorList>
    </citation>
    <scope>NUCLEOTIDE SEQUENCE [LARGE SCALE GENOMIC DNA]</scope>
    <source>
        <strain>ATCC MYA-4620 / CBS 123657 / FGSC 9075 / NRRL 31084 / PH-1</strain>
    </source>
</reference>
<reference key="2">
    <citation type="journal article" date="2010" name="Nature">
        <title>Comparative genomics reveals mobile pathogenicity chromosomes in Fusarium.</title>
        <authorList>
            <person name="Ma L.-J."/>
            <person name="van der Does H.C."/>
            <person name="Borkovich K.A."/>
            <person name="Coleman J.J."/>
            <person name="Daboussi M.-J."/>
            <person name="Di Pietro A."/>
            <person name="Dufresne M."/>
            <person name="Freitag M."/>
            <person name="Grabherr M."/>
            <person name="Henrissat B."/>
            <person name="Houterman P.M."/>
            <person name="Kang S."/>
            <person name="Shim W.-B."/>
            <person name="Woloshuk C."/>
            <person name="Xie X."/>
            <person name="Xu J.-R."/>
            <person name="Antoniw J."/>
            <person name="Baker S.E."/>
            <person name="Bluhm B.H."/>
            <person name="Breakspear A."/>
            <person name="Brown D.W."/>
            <person name="Butchko R.A.E."/>
            <person name="Chapman S."/>
            <person name="Coulson R."/>
            <person name="Coutinho P.M."/>
            <person name="Danchin E.G.J."/>
            <person name="Diener A."/>
            <person name="Gale L.R."/>
            <person name="Gardiner D.M."/>
            <person name="Goff S."/>
            <person name="Hammond-Kosack K.E."/>
            <person name="Hilburn K."/>
            <person name="Hua-Van A."/>
            <person name="Jonkers W."/>
            <person name="Kazan K."/>
            <person name="Kodira C.D."/>
            <person name="Koehrsen M."/>
            <person name="Kumar L."/>
            <person name="Lee Y.-H."/>
            <person name="Li L."/>
            <person name="Manners J.M."/>
            <person name="Miranda-Saavedra D."/>
            <person name="Mukherjee M."/>
            <person name="Park G."/>
            <person name="Park J."/>
            <person name="Park S.-Y."/>
            <person name="Proctor R.H."/>
            <person name="Regev A."/>
            <person name="Ruiz-Roldan M.C."/>
            <person name="Sain D."/>
            <person name="Sakthikumar S."/>
            <person name="Sykes S."/>
            <person name="Schwartz D.C."/>
            <person name="Turgeon B.G."/>
            <person name="Wapinski I."/>
            <person name="Yoder O."/>
            <person name="Young S."/>
            <person name="Zeng Q."/>
            <person name="Zhou S."/>
            <person name="Galagan J."/>
            <person name="Cuomo C.A."/>
            <person name="Kistler H.C."/>
            <person name="Rep M."/>
        </authorList>
    </citation>
    <scope>GENOME REANNOTATION</scope>
    <source>
        <strain>ATCC MYA-4620 / CBS 123657 / FGSC 9075 / NRRL 31084 / PH-1</strain>
    </source>
</reference>
<reference key="3">
    <citation type="journal article" date="2015" name="BMC Genomics">
        <title>The completed genome sequence of the pathogenic ascomycete fungus Fusarium graminearum.</title>
        <authorList>
            <person name="King R."/>
            <person name="Urban M."/>
            <person name="Hammond-Kosack M.C.U."/>
            <person name="Hassani-Pak K."/>
            <person name="Hammond-Kosack K.E."/>
        </authorList>
    </citation>
    <scope>NUCLEOTIDE SEQUENCE [LARGE SCALE GENOMIC DNA]</scope>
    <source>
        <strain>ATCC MYA-4620 / CBS 123657 / FGSC 9075 / NRRL 31084 / PH-1</strain>
    </source>
</reference>
<sequence length="550" mass="61717">MASARRWARKAERCCCTFATYFPLAFVYGLTSWAVWVVVNIGSVSTKSSWIGTGSSIVGVALYVMLNWCYTTAVFTPPGSTTNDMGYGLLPTQNTPQATSFTVKSNGEFRFCKKCQARKPDRAHHCSTCRRCVLKMDHHCPWLATCIGLRNHKAFLLFLIYTSLFCFWSFAVSACWVWYEALNDQEYIDSFLPVNFIMLSVISGIIGLVVGAFTSWHIHLARCGQTTIECLEKTRYLSPLRKTYNSAHNPANEVPEAARHFVDFHANALPGITRPEEGEERREMPRSYPPDGSQPVQLSYAQREREQRQRRYEEYLDEQDSEKLPNVFDLGWKRNLLHLFGPTPALWFFPVSNTTGDGWTWEASSTWLEARDRLSAEREQQRAREVNAGWGSPDDIPDIPERPTGAGKHYSPSPNLAGPKTMSKADRVLGRDPNLYADATQDVPMQRLSPRGRSIDDELADLDTDDEDGFLDANNPDKAEGGKFSPSFTSDSHRRDDAEARALEVVTNGNWGRGGASGMLRKGSSQSTPTRTPSNLSRSGTPKFQDEGVD</sequence>
<organism>
    <name type="scientific">Gibberella zeae (strain ATCC MYA-4620 / CBS 123657 / FGSC 9075 / NRRL 31084 / PH-1)</name>
    <name type="common">Wheat head blight fungus</name>
    <name type="synonym">Fusarium graminearum</name>
    <dbReference type="NCBI Taxonomy" id="229533"/>
    <lineage>
        <taxon>Eukaryota</taxon>
        <taxon>Fungi</taxon>
        <taxon>Dikarya</taxon>
        <taxon>Ascomycota</taxon>
        <taxon>Pezizomycotina</taxon>
        <taxon>Sordariomycetes</taxon>
        <taxon>Hypocreomycetidae</taxon>
        <taxon>Hypocreales</taxon>
        <taxon>Nectriaceae</taxon>
        <taxon>Fusarium</taxon>
    </lineage>
</organism>
<gene>
    <name type="primary">PFA3</name>
    <name type="ORF">FGRRES_05896</name>
    <name type="ORF">FGSG_05896</name>
</gene>
<feature type="chain" id="PRO_0000212955" description="Palmitoyltransferase PFA3">
    <location>
        <begin position="1"/>
        <end position="550"/>
    </location>
</feature>
<feature type="topological domain" description="Cytoplasmic" evidence="2">
    <location>
        <begin position="1"/>
        <end position="21"/>
    </location>
</feature>
<feature type="transmembrane region" description="Helical" evidence="2">
    <location>
        <begin position="22"/>
        <end position="42"/>
    </location>
</feature>
<feature type="topological domain" description="Extracellular" evidence="2">
    <location>
        <begin position="43"/>
        <end position="56"/>
    </location>
</feature>
<feature type="transmembrane region" description="Helical" evidence="2">
    <location>
        <begin position="57"/>
        <end position="77"/>
    </location>
</feature>
<feature type="topological domain" description="Cytoplasmic" evidence="2">
    <location>
        <begin position="78"/>
        <end position="153"/>
    </location>
</feature>
<feature type="transmembrane region" description="Helical" evidence="2">
    <location>
        <begin position="154"/>
        <end position="174"/>
    </location>
</feature>
<feature type="topological domain" description="Extracellular" evidence="2">
    <location>
        <begin position="175"/>
        <end position="190"/>
    </location>
</feature>
<feature type="transmembrane region" description="Helical" evidence="2">
    <location>
        <begin position="191"/>
        <end position="211"/>
    </location>
</feature>
<feature type="topological domain" description="Cytoplasmic" evidence="2">
    <location>
        <begin position="212"/>
        <end position="550"/>
    </location>
</feature>
<feature type="domain" description="DHHC" evidence="3">
    <location>
        <begin position="110"/>
        <end position="160"/>
    </location>
</feature>
<feature type="region of interest" description="Disordered" evidence="4">
    <location>
        <begin position="272"/>
        <end position="304"/>
    </location>
</feature>
<feature type="region of interest" description="Disordered" evidence="4">
    <location>
        <begin position="378"/>
        <end position="422"/>
    </location>
</feature>
<feature type="region of interest" description="Disordered" evidence="4">
    <location>
        <begin position="434"/>
        <end position="550"/>
    </location>
</feature>
<feature type="compositionally biased region" description="Basic and acidic residues" evidence="4">
    <location>
        <begin position="274"/>
        <end position="285"/>
    </location>
</feature>
<feature type="compositionally biased region" description="Acidic residues" evidence="4">
    <location>
        <begin position="457"/>
        <end position="470"/>
    </location>
</feature>
<feature type="compositionally biased region" description="Basic and acidic residues" evidence="4">
    <location>
        <begin position="491"/>
        <end position="502"/>
    </location>
</feature>
<feature type="compositionally biased region" description="Polar residues" evidence="4">
    <location>
        <begin position="523"/>
        <end position="542"/>
    </location>
</feature>